<accession>A0S864</accession>
<evidence type="ECO:0000255" key="1"/>
<evidence type="ECO:0000269" key="2">
    <source>
    </source>
</evidence>
<evidence type="ECO:0000303" key="3">
    <source>
    </source>
</evidence>
<evidence type="ECO:0000305" key="4"/>
<evidence type="ECO:0000305" key="5">
    <source>
    </source>
</evidence>
<evidence type="ECO:0000312" key="6">
    <source>
        <dbReference type="PDB" id="2H7Z"/>
    </source>
</evidence>
<evidence type="ECO:0007829" key="7">
    <source>
        <dbReference type="PDB" id="2H7Z"/>
    </source>
</evidence>
<sequence>MKTLLLAVAVVAFVCLGSADQLGLGRQQIDWGQGQAVGPPYTLCFECNRMTSSDCSTALRCYRGSCYTLYRPDENCELKWAVKGCAETCPTAGPNERVKCCRSPRCNDD</sequence>
<reference key="1">
    <citation type="journal article" date="2009" name="FASEB J.">
        <title>Irditoxin, a novel covalently linked heterodimeric three-finger toxin with high taxon-specific neurotoxicity.</title>
        <authorList>
            <person name="Pawlak J."/>
            <person name="Mackessy S.P."/>
            <person name="Sixberry N.M."/>
            <person name="Stura E.A."/>
            <person name="Le Du M.H."/>
            <person name="Menez R."/>
            <person name="Foo C.S."/>
            <person name="Menez A."/>
            <person name="Nirthanan S."/>
            <person name="Kini R.M."/>
        </authorList>
    </citation>
    <scope>NUCLEOTIDE SEQUENCE [MRNA]</scope>
    <scope>PROTEIN SEQUENCE OF 35-99</scope>
    <scope>FUNCTION</scope>
    <scope>SUBUNIT</scope>
    <scope>SUBCELLULAR LOCATION</scope>
    <scope>MASS SPECTROMETRY</scope>
    <scope>TOXIC DOSE</scope>
    <scope>X-RAY CRYSTALLOGRAPHY (1.5 ANGSTROMS) OF 35-109</scope>
    <scope>PYROGLUTAMATE FORMATION AT GLN-35</scope>
    <scope>DISULFIDE BONDS</scope>
    <source>
        <tissue>Venom</tissue>
        <tissue>Venom gland</tissue>
    </source>
</reference>
<organism>
    <name type="scientific">Boiga irregularis</name>
    <name type="common">Brown tree snake</name>
    <dbReference type="NCBI Taxonomy" id="92519"/>
    <lineage>
        <taxon>Eukaryota</taxon>
        <taxon>Metazoa</taxon>
        <taxon>Chordata</taxon>
        <taxon>Craniata</taxon>
        <taxon>Vertebrata</taxon>
        <taxon>Euteleostomi</taxon>
        <taxon>Lepidosauria</taxon>
        <taxon>Squamata</taxon>
        <taxon>Bifurcata</taxon>
        <taxon>Unidentata</taxon>
        <taxon>Episquamata</taxon>
        <taxon>Toxicofera</taxon>
        <taxon>Serpentes</taxon>
        <taxon>Colubroidea</taxon>
        <taxon>Colubridae</taxon>
        <taxon>Colubrinae</taxon>
        <taxon>Boiga</taxon>
    </lineage>
</organism>
<keyword id="KW-0002">3D-structure</keyword>
<keyword id="KW-0008">Acetylcholine receptor inhibiting toxin</keyword>
<keyword id="KW-0903">Direct protein sequencing</keyword>
<keyword id="KW-1015">Disulfide bond</keyword>
<keyword id="KW-0872">Ion channel impairing toxin</keyword>
<keyword id="KW-0528">Neurotoxin</keyword>
<keyword id="KW-0629">Postsynaptic neurotoxin</keyword>
<keyword id="KW-0873">Pyrrolidone carboxylic acid</keyword>
<keyword id="KW-0964">Secreted</keyword>
<keyword id="KW-0732">Signal</keyword>
<keyword id="KW-0800">Toxin</keyword>
<name>3NBA_BOIIR</name>
<protein>
    <recommendedName>
        <fullName evidence="3">Irditoxin subunit A</fullName>
        <shortName evidence="3">IrTxA</shortName>
    </recommendedName>
</protein>
<dbReference type="EMBL" id="DQ304538">
    <property type="protein sequence ID" value="ABC17853.1"/>
    <property type="molecule type" value="mRNA"/>
</dbReference>
<dbReference type="PDB" id="2H7Z">
    <property type="method" value="X-ray"/>
    <property type="resolution" value="1.50 A"/>
    <property type="chains" value="A=35-109"/>
</dbReference>
<dbReference type="PDBsum" id="2H7Z"/>
<dbReference type="SMR" id="A0S864"/>
<dbReference type="EvolutionaryTrace" id="A0S864"/>
<dbReference type="GO" id="GO:0005576">
    <property type="term" value="C:extracellular region"/>
    <property type="evidence" value="ECO:0000314"/>
    <property type="project" value="UniProtKB"/>
</dbReference>
<dbReference type="GO" id="GO:0030550">
    <property type="term" value="F:acetylcholine receptor inhibitor activity"/>
    <property type="evidence" value="ECO:0000314"/>
    <property type="project" value="UniProtKB"/>
</dbReference>
<dbReference type="GO" id="GO:0099106">
    <property type="term" value="F:ion channel regulator activity"/>
    <property type="evidence" value="ECO:0007669"/>
    <property type="project" value="UniProtKB-KW"/>
</dbReference>
<dbReference type="GO" id="GO:0090729">
    <property type="term" value="F:toxin activity"/>
    <property type="evidence" value="ECO:0000314"/>
    <property type="project" value="UniProtKB"/>
</dbReference>
<dbReference type="CDD" id="cd00206">
    <property type="entry name" value="TFP_snake_toxin"/>
    <property type="match status" value="1"/>
</dbReference>
<dbReference type="Gene3D" id="2.10.60.10">
    <property type="entry name" value="CD59"/>
    <property type="match status" value="1"/>
</dbReference>
<dbReference type="InterPro" id="IPR003571">
    <property type="entry name" value="Snake_3FTx"/>
</dbReference>
<dbReference type="InterPro" id="IPR045860">
    <property type="entry name" value="Snake_toxin-like_sf"/>
</dbReference>
<dbReference type="InterPro" id="IPR018354">
    <property type="entry name" value="Snake_toxin_con_site"/>
</dbReference>
<dbReference type="InterPro" id="IPR054131">
    <property type="entry name" value="Toxin_cobra-type"/>
</dbReference>
<dbReference type="Pfam" id="PF21947">
    <property type="entry name" value="Toxin_cobra-type"/>
    <property type="match status" value="1"/>
</dbReference>
<dbReference type="SUPFAM" id="SSF57302">
    <property type="entry name" value="Snake toxin-like"/>
    <property type="match status" value="1"/>
</dbReference>
<dbReference type="PROSITE" id="PS00272">
    <property type="entry name" value="SNAKE_TOXIN"/>
    <property type="match status" value="1"/>
</dbReference>
<comment type="function">
    <text evidence="2">This bird and reptile-specific postsynaptic neurotoxin inhibits the chick muscle alpha-1-beta-1-gamma-delta (CHRNA1-CHRNB1-CHRNG-CHNRD) nicotinic acetylcholine receptor (nAChR) 100-fold more compared with the mouse receptor. In vivo, produces rapid flaccid paralysis, dyspnea and increased respiratory rate in geckos. At sublethal doses geckos were immobilized for up to three days and then recovered. Chicks injected with lethal doses showed rapid onset of inactivity, dyspnea and neck droop, and no extended paralysis with survival was seen.</text>
</comment>
<comment type="subunit">
    <text evidence="2">Heterodimer of A and B chains; disulfide-linked.</text>
</comment>
<comment type="subcellular location">
    <subcellularLocation>
        <location evidence="2">Secreted</location>
    </subcellularLocation>
</comment>
<comment type="tissue specificity">
    <text evidence="4">Expressed by the venom gland.</text>
</comment>
<comment type="mass spectrometry">
    <text>The measured mass is that of the reduced peptide.</text>
</comment>
<comment type="toxic dose">
    <text evidence="2">LD(50) is 0.55 mg/kg by intraperitoneal injection into geckos.</text>
</comment>
<comment type="toxic dose">
    <text evidence="2">LD(50) is 0.22 mg/kg by intraperitoneal injection into chicks.</text>
</comment>
<comment type="miscellaneous">
    <text evidence="2">IC(50) is 11.2 nM for indirectly stimulated, nerve-evoked twitch responses of the chick biventer cervicis muscle acetylcholine receptor channel.</text>
</comment>
<comment type="miscellaneous">
    <text evidence="2">Negative results: is not toxic to mice at doses up to 25 ug/g (i.p.). Does not inhibit mouse alpha-3-beta-2/CHRNA3-CHRNB2 and alpha-7/CHRNA7 nicotinic acetylcholine receptors.</text>
</comment>
<comment type="similarity">
    <text evidence="4">Belongs to the three-finger toxin family. Ancestral subfamily. Boigatoxin sub-subfamily.</text>
</comment>
<proteinExistence type="evidence at protein level"/>
<feature type="signal peptide" evidence="1">
    <location>
        <begin position="1"/>
        <end position="19"/>
    </location>
</feature>
<feature type="propeptide" id="PRO_0000313788" evidence="2">
    <location>
        <begin position="20"/>
        <end position="34"/>
    </location>
</feature>
<feature type="chain" id="PRO_5000171334" description="Irditoxin subunit A" evidence="5">
    <location>
        <begin position="35"/>
        <end position="109"/>
    </location>
</feature>
<feature type="modified residue" description="Pyrrolidone carboxylic acid" evidence="2">
    <location>
        <position position="35"/>
    </location>
</feature>
<feature type="disulfide bond" evidence="2 6">
    <location>
        <begin position="44"/>
        <end position="66"/>
    </location>
</feature>
<feature type="disulfide bond" evidence="2 6">
    <location>
        <begin position="47"/>
        <end position="55"/>
    </location>
</feature>
<feature type="disulfide bond" evidence="2 6">
    <location>
        <begin position="61"/>
        <end position="85"/>
    </location>
</feature>
<feature type="disulfide bond" description="Interchain (with C-52 in Irditoxin subunit B)" evidence="2 6">
    <location>
        <position position="76"/>
    </location>
</feature>
<feature type="disulfide bond" evidence="2 6">
    <location>
        <begin position="89"/>
        <end position="100"/>
    </location>
</feature>
<feature type="disulfide bond" evidence="2 6">
    <location>
        <begin position="101"/>
        <end position="106"/>
    </location>
</feature>
<feature type="strand" evidence="7">
    <location>
        <begin position="37"/>
        <end position="40"/>
    </location>
</feature>
<feature type="strand" evidence="7">
    <location>
        <begin position="42"/>
        <end position="45"/>
    </location>
</feature>
<feature type="turn" evidence="7">
    <location>
        <begin position="49"/>
        <end position="51"/>
    </location>
</feature>
<feature type="strand" evidence="7">
    <location>
        <begin position="58"/>
        <end position="61"/>
    </location>
</feature>
<feature type="strand" evidence="7">
    <location>
        <begin position="63"/>
        <end position="72"/>
    </location>
</feature>
<feature type="strand" evidence="7">
    <location>
        <begin position="78"/>
        <end position="88"/>
    </location>
</feature>
<feature type="strand" evidence="7">
    <location>
        <begin position="97"/>
        <end position="101"/>
    </location>
</feature>